<keyword id="KW-0028">Amino-acid biosynthesis</keyword>
<keyword id="KW-0067">ATP-binding</keyword>
<keyword id="KW-0963">Cytoplasm</keyword>
<keyword id="KW-0418">Kinase</keyword>
<keyword id="KW-0547">Nucleotide-binding</keyword>
<keyword id="KW-0791">Threonine biosynthesis</keyword>
<keyword id="KW-0808">Transferase</keyword>
<evidence type="ECO:0000255" key="1">
    <source>
        <dbReference type="HAMAP-Rule" id="MF_00384"/>
    </source>
</evidence>
<feature type="chain" id="PRO_1000122446" description="Homoserine kinase">
    <location>
        <begin position="1"/>
        <end position="289"/>
    </location>
</feature>
<feature type="binding site" evidence="1">
    <location>
        <begin position="79"/>
        <end position="89"/>
    </location>
    <ligand>
        <name>ATP</name>
        <dbReference type="ChEBI" id="CHEBI:30616"/>
    </ligand>
</feature>
<comment type="function">
    <text evidence="1">Catalyzes the ATP-dependent phosphorylation of L-homoserine to L-homoserine phosphate.</text>
</comment>
<comment type="catalytic activity">
    <reaction evidence="1">
        <text>L-homoserine + ATP = O-phospho-L-homoserine + ADP + H(+)</text>
        <dbReference type="Rhea" id="RHEA:13985"/>
        <dbReference type="ChEBI" id="CHEBI:15378"/>
        <dbReference type="ChEBI" id="CHEBI:30616"/>
        <dbReference type="ChEBI" id="CHEBI:57476"/>
        <dbReference type="ChEBI" id="CHEBI:57590"/>
        <dbReference type="ChEBI" id="CHEBI:456216"/>
        <dbReference type="EC" id="2.7.1.39"/>
    </reaction>
</comment>
<comment type="pathway">
    <text evidence="1">Amino-acid biosynthesis; L-threonine biosynthesis; L-threonine from L-aspartate: step 4/5.</text>
</comment>
<comment type="subcellular location">
    <subcellularLocation>
        <location evidence="1">Cytoplasm</location>
    </subcellularLocation>
</comment>
<comment type="similarity">
    <text evidence="1">Belongs to the GHMP kinase family. Homoserine kinase subfamily.</text>
</comment>
<gene>
    <name evidence="1" type="primary">thrB</name>
    <name type="ordered locus">SPH_1492</name>
</gene>
<protein>
    <recommendedName>
        <fullName evidence="1">Homoserine kinase</fullName>
        <shortName evidence="1">HK</shortName>
        <shortName evidence="1">HSK</shortName>
        <ecNumber evidence="1">2.7.1.39</ecNumber>
    </recommendedName>
</protein>
<proteinExistence type="inferred from homology"/>
<organism>
    <name type="scientific">Streptococcus pneumoniae (strain Hungary19A-6)</name>
    <dbReference type="NCBI Taxonomy" id="487214"/>
    <lineage>
        <taxon>Bacteria</taxon>
        <taxon>Bacillati</taxon>
        <taxon>Bacillota</taxon>
        <taxon>Bacilli</taxon>
        <taxon>Lactobacillales</taxon>
        <taxon>Streptococcaceae</taxon>
        <taxon>Streptococcus</taxon>
    </lineage>
</organism>
<dbReference type="EC" id="2.7.1.39" evidence="1"/>
<dbReference type="EMBL" id="CP000936">
    <property type="protein sequence ID" value="ACA37067.1"/>
    <property type="molecule type" value="Genomic_DNA"/>
</dbReference>
<dbReference type="RefSeq" id="WP_000692438.1">
    <property type="nucleotide sequence ID" value="NC_010380.1"/>
</dbReference>
<dbReference type="SMR" id="B1ICG1"/>
<dbReference type="GeneID" id="45653380"/>
<dbReference type="KEGG" id="spv:SPH_1492"/>
<dbReference type="HOGENOM" id="CLU_041243_0_0_9"/>
<dbReference type="UniPathway" id="UPA00050">
    <property type="reaction ID" value="UER00064"/>
</dbReference>
<dbReference type="Proteomes" id="UP000002163">
    <property type="component" value="Chromosome"/>
</dbReference>
<dbReference type="GO" id="GO:0005737">
    <property type="term" value="C:cytoplasm"/>
    <property type="evidence" value="ECO:0007669"/>
    <property type="project" value="UniProtKB-SubCell"/>
</dbReference>
<dbReference type="GO" id="GO:0005524">
    <property type="term" value="F:ATP binding"/>
    <property type="evidence" value="ECO:0007669"/>
    <property type="project" value="UniProtKB-UniRule"/>
</dbReference>
<dbReference type="GO" id="GO:0004413">
    <property type="term" value="F:homoserine kinase activity"/>
    <property type="evidence" value="ECO:0007669"/>
    <property type="project" value="UniProtKB-UniRule"/>
</dbReference>
<dbReference type="GO" id="GO:0009088">
    <property type="term" value="P:threonine biosynthetic process"/>
    <property type="evidence" value="ECO:0007669"/>
    <property type="project" value="UniProtKB-UniRule"/>
</dbReference>
<dbReference type="Gene3D" id="3.30.230.10">
    <property type="match status" value="1"/>
</dbReference>
<dbReference type="Gene3D" id="3.30.70.890">
    <property type="entry name" value="GHMP kinase, C-terminal domain"/>
    <property type="match status" value="1"/>
</dbReference>
<dbReference type="HAMAP" id="MF_00384">
    <property type="entry name" value="Homoser_kinase"/>
    <property type="match status" value="1"/>
</dbReference>
<dbReference type="InterPro" id="IPR013750">
    <property type="entry name" value="GHMP_kinase_C_dom"/>
</dbReference>
<dbReference type="InterPro" id="IPR036554">
    <property type="entry name" value="GHMP_kinase_C_sf"/>
</dbReference>
<dbReference type="InterPro" id="IPR006204">
    <property type="entry name" value="GHMP_kinase_N_dom"/>
</dbReference>
<dbReference type="InterPro" id="IPR006203">
    <property type="entry name" value="GHMP_knse_ATP-bd_CS"/>
</dbReference>
<dbReference type="InterPro" id="IPR000870">
    <property type="entry name" value="Homoserine_kinase"/>
</dbReference>
<dbReference type="InterPro" id="IPR020568">
    <property type="entry name" value="Ribosomal_Su5_D2-typ_SF"/>
</dbReference>
<dbReference type="InterPro" id="IPR014721">
    <property type="entry name" value="Ribsml_uS5_D2-typ_fold_subgr"/>
</dbReference>
<dbReference type="NCBIfam" id="TIGR00191">
    <property type="entry name" value="thrB"/>
    <property type="match status" value="1"/>
</dbReference>
<dbReference type="PANTHER" id="PTHR20861:SF1">
    <property type="entry name" value="HOMOSERINE KINASE"/>
    <property type="match status" value="1"/>
</dbReference>
<dbReference type="PANTHER" id="PTHR20861">
    <property type="entry name" value="HOMOSERINE/4-DIPHOSPHOCYTIDYL-2-C-METHYL-D-ERYTHRITOL KINASE"/>
    <property type="match status" value="1"/>
</dbReference>
<dbReference type="Pfam" id="PF08544">
    <property type="entry name" value="GHMP_kinases_C"/>
    <property type="match status" value="1"/>
</dbReference>
<dbReference type="Pfam" id="PF00288">
    <property type="entry name" value="GHMP_kinases_N"/>
    <property type="match status" value="1"/>
</dbReference>
<dbReference type="PIRSF" id="PIRSF000676">
    <property type="entry name" value="Homoser_kin"/>
    <property type="match status" value="1"/>
</dbReference>
<dbReference type="PRINTS" id="PR00958">
    <property type="entry name" value="HOMSERKINASE"/>
</dbReference>
<dbReference type="SUPFAM" id="SSF55060">
    <property type="entry name" value="GHMP Kinase, C-terminal domain"/>
    <property type="match status" value="1"/>
</dbReference>
<dbReference type="SUPFAM" id="SSF54211">
    <property type="entry name" value="Ribosomal protein S5 domain 2-like"/>
    <property type="match status" value="1"/>
</dbReference>
<dbReference type="PROSITE" id="PS00627">
    <property type="entry name" value="GHMP_KINASES_ATP"/>
    <property type="match status" value="1"/>
</dbReference>
<reference key="1">
    <citation type="journal article" date="2010" name="Genome Biol.">
        <title>Structure and dynamics of the pan-genome of Streptococcus pneumoniae and closely related species.</title>
        <authorList>
            <person name="Donati C."/>
            <person name="Hiller N.L."/>
            <person name="Tettelin H."/>
            <person name="Muzzi A."/>
            <person name="Croucher N.J."/>
            <person name="Angiuoli S.V."/>
            <person name="Oggioni M."/>
            <person name="Dunning Hotopp J.C."/>
            <person name="Hu F.Z."/>
            <person name="Riley D.R."/>
            <person name="Covacci A."/>
            <person name="Mitchell T.J."/>
            <person name="Bentley S.D."/>
            <person name="Kilian M."/>
            <person name="Ehrlich G.D."/>
            <person name="Rappuoli R."/>
            <person name="Moxon E.R."/>
            <person name="Masignani V."/>
        </authorList>
    </citation>
    <scope>NUCLEOTIDE SEQUENCE [LARGE SCALE GENOMIC DNA]</scope>
    <source>
        <strain>Hungary19A-6</strain>
    </source>
</reference>
<accession>B1ICG1</accession>
<name>KHSE_STRPI</name>
<sequence>MKIIVPATSANIGPGFDSVGVAVTKYLQIEVCEERDEWLIEHQIGKWIPHDERNLLLKIALQIVPDLQPRRLKMTSDVPLARGLGSSSSVIVAGIELANQLGQLNLSDHEKLQLATKIEGHPDNVAPAIYGNLVIASSVEGQVSAIVADFPECDFLAYIPNYELRTRDSRSVLPKKLSYKEAVAASSIANVAVAALLAGDMVTAGQAIEGDLFHERYRQDLVREFAMIKQVTKENGAYATYLSGAGPTVMVLASHDKMPTIKAELEKQPFKGKLHDLRVDTQGVRVEAK</sequence>